<keyword id="KW-0687">Ribonucleoprotein</keyword>
<keyword id="KW-0689">Ribosomal protein</keyword>
<keyword id="KW-0694">RNA-binding</keyword>
<keyword id="KW-0699">rRNA-binding</keyword>
<dbReference type="EMBL" id="CP000526">
    <property type="protein sequence ID" value="ABM51393.1"/>
    <property type="molecule type" value="Genomic_DNA"/>
</dbReference>
<dbReference type="RefSeq" id="WP_004197941.1">
    <property type="nucleotide sequence ID" value="NC_008785.1"/>
</dbReference>
<dbReference type="SMR" id="A1V884"/>
<dbReference type="GeneID" id="92980300"/>
<dbReference type="KEGG" id="bmv:BMASAVP1_A3150"/>
<dbReference type="HOGENOM" id="CLU_055188_4_2_4"/>
<dbReference type="GO" id="GO:0022625">
    <property type="term" value="C:cytosolic large ribosomal subunit"/>
    <property type="evidence" value="ECO:0007669"/>
    <property type="project" value="TreeGrafter"/>
</dbReference>
<dbReference type="GO" id="GO:0019843">
    <property type="term" value="F:rRNA binding"/>
    <property type="evidence" value="ECO:0007669"/>
    <property type="project" value="UniProtKB-UniRule"/>
</dbReference>
<dbReference type="GO" id="GO:0003735">
    <property type="term" value="F:structural constituent of ribosome"/>
    <property type="evidence" value="ECO:0007669"/>
    <property type="project" value="InterPro"/>
</dbReference>
<dbReference type="GO" id="GO:0006412">
    <property type="term" value="P:translation"/>
    <property type="evidence" value="ECO:0007669"/>
    <property type="project" value="UniProtKB-UniRule"/>
</dbReference>
<dbReference type="Gene3D" id="3.100.10.10">
    <property type="match status" value="1"/>
</dbReference>
<dbReference type="HAMAP" id="MF_01341">
    <property type="entry name" value="Ribosomal_uL15"/>
    <property type="match status" value="1"/>
</dbReference>
<dbReference type="InterPro" id="IPR030878">
    <property type="entry name" value="Ribosomal_uL15"/>
</dbReference>
<dbReference type="InterPro" id="IPR021131">
    <property type="entry name" value="Ribosomal_uL15/eL18"/>
</dbReference>
<dbReference type="InterPro" id="IPR036227">
    <property type="entry name" value="Ribosomal_uL15/eL18_sf"/>
</dbReference>
<dbReference type="InterPro" id="IPR005749">
    <property type="entry name" value="Ribosomal_uL15_bac-type"/>
</dbReference>
<dbReference type="InterPro" id="IPR001196">
    <property type="entry name" value="Ribosomal_uL15_CS"/>
</dbReference>
<dbReference type="NCBIfam" id="TIGR01071">
    <property type="entry name" value="rplO_bact"/>
    <property type="match status" value="1"/>
</dbReference>
<dbReference type="PANTHER" id="PTHR12934">
    <property type="entry name" value="50S RIBOSOMAL PROTEIN L15"/>
    <property type="match status" value="1"/>
</dbReference>
<dbReference type="PANTHER" id="PTHR12934:SF11">
    <property type="entry name" value="LARGE RIBOSOMAL SUBUNIT PROTEIN UL15M"/>
    <property type="match status" value="1"/>
</dbReference>
<dbReference type="Pfam" id="PF00828">
    <property type="entry name" value="Ribosomal_L27A"/>
    <property type="match status" value="1"/>
</dbReference>
<dbReference type="SUPFAM" id="SSF52080">
    <property type="entry name" value="Ribosomal proteins L15p and L18e"/>
    <property type="match status" value="1"/>
</dbReference>
<dbReference type="PROSITE" id="PS00475">
    <property type="entry name" value="RIBOSOMAL_L15"/>
    <property type="match status" value="1"/>
</dbReference>
<comment type="function">
    <text evidence="1">Binds to the 23S rRNA.</text>
</comment>
<comment type="subunit">
    <text evidence="1">Part of the 50S ribosomal subunit.</text>
</comment>
<comment type="similarity">
    <text evidence="1">Belongs to the universal ribosomal protein uL15 family.</text>
</comment>
<evidence type="ECO:0000255" key="1">
    <source>
        <dbReference type="HAMAP-Rule" id="MF_01341"/>
    </source>
</evidence>
<evidence type="ECO:0000256" key="2">
    <source>
        <dbReference type="SAM" id="MobiDB-lite"/>
    </source>
</evidence>
<evidence type="ECO:0000305" key="3"/>
<gene>
    <name evidence="1" type="primary">rplO</name>
    <name type="ordered locus">BMASAVP1_A3150</name>
</gene>
<protein>
    <recommendedName>
        <fullName evidence="1">Large ribosomal subunit protein uL15</fullName>
    </recommendedName>
    <alternativeName>
        <fullName evidence="3">50S ribosomal protein L15</fullName>
    </alternativeName>
</protein>
<sequence length="144" mass="15136">MELNNLKPAEGAKHAKRRVGRGIGSGLGKTAGRGHKGQKSRSGGFHKVGFEGGQMPLQRRLPKRGFTSLTKEFVGEVRLGDLEKLPVDEIDLLALKQAGLVGELIKSAKIIATGELKRKIVVKGLGATKGARAAIEAAGGSFAE</sequence>
<name>RL15_BURMS</name>
<feature type="chain" id="PRO_1000054439" description="Large ribosomal subunit protein uL15">
    <location>
        <begin position="1"/>
        <end position="144"/>
    </location>
</feature>
<feature type="region of interest" description="Disordered" evidence="2">
    <location>
        <begin position="1"/>
        <end position="56"/>
    </location>
</feature>
<feature type="compositionally biased region" description="Gly residues" evidence="2">
    <location>
        <begin position="21"/>
        <end position="31"/>
    </location>
</feature>
<accession>A1V884</accession>
<organism>
    <name type="scientific">Burkholderia mallei (strain SAVP1)</name>
    <dbReference type="NCBI Taxonomy" id="320388"/>
    <lineage>
        <taxon>Bacteria</taxon>
        <taxon>Pseudomonadati</taxon>
        <taxon>Pseudomonadota</taxon>
        <taxon>Betaproteobacteria</taxon>
        <taxon>Burkholderiales</taxon>
        <taxon>Burkholderiaceae</taxon>
        <taxon>Burkholderia</taxon>
        <taxon>pseudomallei group</taxon>
    </lineage>
</organism>
<proteinExistence type="inferred from homology"/>
<reference key="1">
    <citation type="journal article" date="2010" name="Genome Biol. Evol.">
        <title>Continuing evolution of Burkholderia mallei through genome reduction and large-scale rearrangements.</title>
        <authorList>
            <person name="Losada L."/>
            <person name="Ronning C.M."/>
            <person name="DeShazer D."/>
            <person name="Woods D."/>
            <person name="Fedorova N."/>
            <person name="Kim H.S."/>
            <person name="Shabalina S.A."/>
            <person name="Pearson T.R."/>
            <person name="Brinkac L."/>
            <person name="Tan P."/>
            <person name="Nandi T."/>
            <person name="Crabtree J."/>
            <person name="Badger J."/>
            <person name="Beckstrom-Sternberg S."/>
            <person name="Saqib M."/>
            <person name="Schutzer S.E."/>
            <person name="Keim P."/>
            <person name="Nierman W.C."/>
        </authorList>
    </citation>
    <scope>NUCLEOTIDE SEQUENCE [LARGE SCALE GENOMIC DNA]</scope>
    <source>
        <strain>SAVP1</strain>
    </source>
</reference>